<protein>
    <recommendedName>
        <fullName evidence="1">Phosphoglycerate kinase</fullName>
        <ecNumber evidence="1">2.7.2.3</ecNumber>
    </recommendedName>
</protein>
<gene>
    <name evidence="1" type="primary">pgk</name>
    <name type="ordered locus">MGAS9429_Spy1604</name>
</gene>
<dbReference type="EC" id="2.7.2.3" evidence="1"/>
<dbReference type="EMBL" id="CP000259">
    <property type="protein sequence ID" value="ABF32791.1"/>
    <property type="molecule type" value="Genomic_DNA"/>
</dbReference>
<dbReference type="RefSeq" id="WP_002982888.1">
    <property type="nucleotide sequence ID" value="NC_008021.1"/>
</dbReference>
<dbReference type="SMR" id="Q1JK32"/>
<dbReference type="KEGG" id="spk:MGAS9429_Spy1604"/>
<dbReference type="HOGENOM" id="CLU_025427_0_1_9"/>
<dbReference type="UniPathway" id="UPA00109">
    <property type="reaction ID" value="UER00185"/>
</dbReference>
<dbReference type="Proteomes" id="UP000002433">
    <property type="component" value="Chromosome"/>
</dbReference>
<dbReference type="GO" id="GO:0005829">
    <property type="term" value="C:cytosol"/>
    <property type="evidence" value="ECO:0007669"/>
    <property type="project" value="TreeGrafter"/>
</dbReference>
<dbReference type="GO" id="GO:0043531">
    <property type="term" value="F:ADP binding"/>
    <property type="evidence" value="ECO:0007669"/>
    <property type="project" value="TreeGrafter"/>
</dbReference>
<dbReference type="GO" id="GO:0005524">
    <property type="term" value="F:ATP binding"/>
    <property type="evidence" value="ECO:0007669"/>
    <property type="project" value="UniProtKB-KW"/>
</dbReference>
<dbReference type="GO" id="GO:0004618">
    <property type="term" value="F:phosphoglycerate kinase activity"/>
    <property type="evidence" value="ECO:0007669"/>
    <property type="project" value="UniProtKB-UniRule"/>
</dbReference>
<dbReference type="GO" id="GO:0006094">
    <property type="term" value="P:gluconeogenesis"/>
    <property type="evidence" value="ECO:0007669"/>
    <property type="project" value="TreeGrafter"/>
</dbReference>
<dbReference type="GO" id="GO:0006096">
    <property type="term" value="P:glycolytic process"/>
    <property type="evidence" value="ECO:0007669"/>
    <property type="project" value="UniProtKB-UniRule"/>
</dbReference>
<dbReference type="FunFam" id="3.40.50.1260:FF:000001">
    <property type="entry name" value="Phosphoglycerate kinase"/>
    <property type="match status" value="1"/>
</dbReference>
<dbReference type="FunFam" id="3.40.50.1260:FF:000008">
    <property type="entry name" value="Phosphoglycerate kinase"/>
    <property type="match status" value="1"/>
</dbReference>
<dbReference type="Gene3D" id="3.40.50.1260">
    <property type="entry name" value="Phosphoglycerate kinase, N-terminal domain"/>
    <property type="match status" value="2"/>
</dbReference>
<dbReference type="HAMAP" id="MF_00145">
    <property type="entry name" value="Phosphoglyc_kinase"/>
    <property type="match status" value="1"/>
</dbReference>
<dbReference type="InterPro" id="IPR001576">
    <property type="entry name" value="Phosphoglycerate_kinase"/>
</dbReference>
<dbReference type="InterPro" id="IPR015911">
    <property type="entry name" value="Phosphoglycerate_kinase_CS"/>
</dbReference>
<dbReference type="InterPro" id="IPR015824">
    <property type="entry name" value="Phosphoglycerate_kinase_N"/>
</dbReference>
<dbReference type="InterPro" id="IPR036043">
    <property type="entry name" value="Phosphoglycerate_kinase_sf"/>
</dbReference>
<dbReference type="PANTHER" id="PTHR11406">
    <property type="entry name" value="PHOSPHOGLYCERATE KINASE"/>
    <property type="match status" value="1"/>
</dbReference>
<dbReference type="PANTHER" id="PTHR11406:SF23">
    <property type="entry name" value="PHOSPHOGLYCERATE KINASE 1, CHLOROPLASTIC-RELATED"/>
    <property type="match status" value="1"/>
</dbReference>
<dbReference type="Pfam" id="PF00162">
    <property type="entry name" value="PGK"/>
    <property type="match status" value="1"/>
</dbReference>
<dbReference type="PIRSF" id="PIRSF000724">
    <property type="entry name" value="Pgk"/>
    <property type="match status" value="1"/>
</dbReference>
<dbReference type="PRINTS" id="PR00477">
    <property type="entry name" value="PHGLYCKINASE"/>
</dbReference>
<dbReference type="SUPFAM" id="SSF53748">
    <property type="entry name" value="Phosphoglycerate kinase"/>
    <property type="match status" value="1"/>
</dbReference>
<dbReference type="PROSITE" id="PS00111">
    <property type="entry name" value="PGLYCERATE_KINASE"/>
    <property type="match status" value="1"/>
</dbReference>
<sequence>MAKLTVKDVDLKGKKVLVRVDFNVPLKDGVITNDNRITAALPTIKYIIEQGGRAILFSHLGRVKEEADKEGKSLAPVAADLAAKLGQDVVFPGVTRGSKLEEAINALEDGQVLLVENTRFEDVDGKKESKNDEELGKYWASLGDGIFVNDAFGTAHRAHASNVGISANVEKAVAGFLLENEIAYIQEAVETPERPFVAILGGSKVSDKIGVIENLLEKADKVLIGGGMTYTFYKAQGIEIGNSLVEEDKLDVAKDLLEKSNGKLILPVDSKEANAFAGYTEVRDTEGEAVSEGFLGLDIGPKSIAEFDQALTGAKTVVWNGPMGVFENPDFQAGTIGVMDAIVKQPGVKSIIGGGDSAAAAINLGRADKFSWISTGGGASMELLEGKVLPGLAALTEK</sequence>
<reference key="1">
    <citation type="journal article" date="2006" name="Proc. Natl. Acad. Sci. U.S.A.">
        <title>Molecular genetic anatomy of inter- and intraserotype variation in the human bacterial pathogen group A Streptococcus.</title>
        <authorList>
            <person name="Beres S.B."/>
            <person name="Richter E.W."/>
            <person name="Nagiec M.J."/>
            <person name="Sumby P."/>
            <person name="Porcella S.F."/>
            <person name="DeLeo F.R."/>
            <person name="Musser J.M."/>
        </authorList>
    </citation>
    <scope>NUCLEOTIDE SEQUENCE [LARGE SCALE GENOMIC DNA]</scope>
    <source>
        <strain>MGAS9429</strain>
    </source>
</reference>
<comment type="catalytic activity">
    <reaction evidence="1">
        <text>(2R)-3-phosphoglycerate + ATP = (2R)-3-phospho-glyceroyl phosphate + ADP</text>
        <dbReference type="Rhea" id="RHEA:14801"/>
        <dbReference type="ChEBI" id="CHEBI:30616"/>
        <dbReference type="ChEBI" id="CHEBI:57604"/>
        <dbReference type="ChEBI" id="CHEBI:58272"/>
        <dbReference type="ChEBI" id="CHEBI:456216"/>
        <dbReference type="EC" id="2.7.2.3"/>
    </reaction>
</comment>
<comment type="pathway">
    <text evidence="1">Carbohydrate degradation; glycolysis; pyruvate from D-glyceraldehyde 3-phosphate: step 2/5.</text>
</comment>
<comment type="subunit">
    <text evidence="1">Monomer.</text>
</comment>
<comment type="subcellular location">
    <subcellularLocation>
        <location evidence="1">Cytoplasm</location>
    </subcellularLocation>
</comment>
<comment type="similarity">
    <text evidence="1">Belongs to the phosphoglycerate kinase family.</text>
</comment>
<organism>
    <name type="scientific">Streptococcus pyogenes serotype M12 (strain MGAS9429)</name>
    <dbReference type="NCBI Taxonomy" id="370551"/>
    <lineage>
        <taxon>Bacteria</taxon>
        <taxon>Bacillati</taxon>
        <taxon>Bacillota</taxon>
        <taxon>Bacilli</taxon>
        <taxon>Lactobacillales</taxon>
        <taxon>Streptococcaceae</taxon>
        <taxon>Streptococcus</taxon>
    </lineage>
</organism>
<proteinExistence type="inferred from homology"/>
<name>PGK_STRPC</name>
<evidence type="ECO:0000255" key="1">
    <source>
        <dbReference type="HAMAP-Rule" id="MF_00145"/>
    </source>
</evidence>
<feature type="chain" id="PRO_1000009656" description="Phosphoglycerate kinase">
    <location>
        <begin position="1"/>
        <end position="398"/>
    </location>
</feature>
<feature type="binding site" evidence="1">
    <location>
        <begin position="21"/>
        <end position="23"/>
    </location>
    <ligand>
        <name>substrate</name>
    </ligand>
</feature>
<feature type="binding site" evidence="1">
    <location>
        <position position="36"/>
    </location>
    <ligand>
        <name>substrate</name>
    </ligand>
</feature>
<feature type="binding site" evidence="1">
    <location>
        <begin position="59"/>
        <end position="62"/>
    </location>
    <ligand>
        <name>substrate</name>
    </ligand>
</feature>
<feature type="binding site" evidence="1">
    <location>
        <position position="119"/>
    </location>
    <ligand>
        <name>substrate</name>
    </ligand>
</feature>
<feature type="binding site" evidence="1">
    <location>
        <position position="157"/>
    </location>
    <ligand>
        <name>substrate</name>
    </ligand>
</feature>
<feature type="binding site" evidence="1">
    <location>
        <position position="208"/>
    </location>
    <ligand>
        <name>ATP</name>
        <dbReference type="ChEBI" id="CHEBI:30616"/>
    </ligand>
</feature>
<feature type="binding site" evidence="1">
    <location>
        <position position="296"/>
    </location>
    <ligand>
        <name>ATP</name>
        <dbReference type="ChEBI" id="CHEBI:30616"/>
    </ligand>
</feature>
<feature type="binding site" evidence="1">
    <location>
        <position position="327"/>
    </location>
    <ligand>
        <name>ATP</name>
        <dbReference type="ChEBI" id="CHEBI:30616"/>
    </ligand>
</feature>
<feature type="binding site" evidence="1">
    <location>
        <begin position="354"/>
        <end position="357"/>
    </location>
    <ligand>
        <name>ATP</name>
        <dbReference type="ChEBI" id="CHEBI:30616"/>
    </ligand>
</feature>
<accession>Q1JK32</accession>
<keyword id="KW-0067">ATP-binding</keyword>
<keyword id="KW-0963">Cytoplasm</keyword>
<keyword id="KW-0324">Glycolysis</keyword>
<keyword id="KW-0418">Kinase</keyword>
<keyword id="KW-0547">Nucleotide-binding</keyword>
<keyword id="KW-0808">Transferase</keyword>